<sequence>MAATTSPMASQLKSGFTTKALVVPKGISGPALRGFPSPRRHTSFTVRAIKTEKPTYQVIQPLNGDPFIGGLETPVTSSPLIAWYLSNLPAYRTAVNPLLRGVEVGLAHGFLLVGPFVKAGPLRNTEYAGAAGSLAAAGLVVILSMCLTMYGIASFKEGEPSIAPALTLTGRKKQPDQLQSADGWAKFTGGFFFGGVSGVTWACFLMYVLDLPYYFK</sequence>
<feature type="transit peptide" description="Chloroplast" evidence="1">
    <location>
        <begin position="1"/>
        <end position="47"/>
    </location>
</feature>
<feature type="chain" id="PRO_0000029427" description="Photosystem I reaction center subunit XI, chloroplastic">
    <location>
        <begin position="48"/>
        <end position="216"/>
    </location>
</feature>
<feature type="topological domain" description="Stromal" evidence="1">
    <location>
        <begin position="48"/>
        <end position="134"/>
    </location>
</feature>
<feature type="transmembrane region" description="Helical" evidence="1">
    <location>
        <begin position="135"/>
        <end position="155"/>
    </location>
</feature>
<feature type="topological domain" description="Lumenal" evidence="1">
    <location>
        <begin position="156"/>
        <end position="188"/>
    </location>
</feature>
<feature type="transmembrane region" description="Helical" evidence="1">
    <location>
        <begin position="189"/>
        <end position="209"/>
    </location>
</feature>
<feature type="topological domain" description="Stromal" evidence="1">
    <location>
        <begin position="210"/>
        <end position="216"/>
    </location>
</feature>
<feature type="strand" evidence="3">
    <location>
        <begin position="55"/>
        <end position="58"/>
    </location>
</feature>
<feature type="strand" evidence="3">
    <location>
        <begin position="61"/>
        <end position="64"/>
    </location>
</feature>
<feature type="strand" evidence="3">
    <location>
        <begin position="66"/>
        <end position="68"/>
    </location>
</feature>
<feature type="turn" evidence="3">
    <location>
        <begin position="74"/>
        <end position="76"/>
    </location>
</feature>
<feature type="turn" evidence="3">
    <location>
        <begin position="79"/>
        <end position="85"/>
    </location>
</feature>
<feature type="strand" evidence="3">
    <location>
        <begin position="87"/>
        <end position="92"/>
    </location>
</feature>
<feature type="helix" evidence="3">
    <location>
        <begin position="97"/>
        <end position="107"/>
    </location>
</feature>
<feature type="strand" evidence="3">
    <location>
        <begin position="110"/>
        <end position="113"/>
    </location>
</feature>
<feature type="helix" evidence="3">
    <location>
        <begin position="114"/>
        <end position="118"/>
    </location>
</feature>
<feature type="strand" evidence="3">
    <location>
        <begin position="127"/>
        <end position="129"/>
    </location>
</feature>
<feature type="turn" evidence="3">
    <location>
        <begin position="134"/>
        <end position="138"/>
    </location>
</feature>
<feature type="helix" evidence="3">
    <location>
        <begin position="139"/>
        <end position="143"/>
    </location>
</feature>
<feature type="turn" evidence="3">
    <location>
        <begin position="144"/>
        <end position="152"/>
    </location>
</feature>
<feature type="turn" evidence="3">
    <location>
        <begin position="171"/>
        <end position="173"/>
    </location>
</feature>
<feature type="helix" evidence="3">
    <location>
        <begin position="181"/>
        <end position="195"/>
    </location>
</feature>
<feature type="turn" evidence="3">
    <location>
        <begin position="197"/>
        <end position="199"/>
    </location>
</feature>
<feature type="helix" evidence="3">
    <location>
        <begin position="200"/>
        <end position="204"/>
    </location>
</feature>
<evidence type="ECO:0000255" key="1"/>
<evidence type="ECO:0000305" key="2"/>
<evidence type="ECO:0007829" key="3">
    <source>
        <dbReference type="PDB" id="2WSC"/>
    </source>
</evidence>
<dbReference type="EMBL" id="X64445">
    <property type="protein sequence ID" value="CAA45775.1"/>
    <property type="molecule type" value="mRNA"/>
</dbReference>
<dbReference type="PIR" id="S35151">
    <property type="entry name" value="S35151"/>
</dbReference>
<dbReference type="PDB" id="2O01">
    <property type="method" value="X-ray"/>
    <property type="resolution" value="3.40 A"/>
    <property type="chains" value="L=53-216"/>
</dbReference>
<dbReference type="PDB" id="2WSC">
    <property type="method" value="X-ray"/>
    <property type="resolution" value="3.30 A"/>
    <property type="chains" value="L=1-216"/>
</dbReference>
<dbReference type="PDB" id="2WSE">
    <property type="method" value="X-ray"/>
    <property type="resolution" value="3.49 A"/>
    <property type="chains" value="L=1-216"/>
</dbReference>
<dbReference type="PDB" id="2WSF">
    <property type="method" value="X-ray"/>
    <property type="resolution" value="3.48 A"/>
    <property type="chains" value="L=1-216"/>
</dbReference>
<dbReference type="PDB" id="9GRX">
    <property type="method" value="EM"/>
    <property type="resolution" value="3.19 A"/>
    <property type="chains" value="l=57-216"/>
</dbReference>
<dbReference type="PDBsum" id="2O01"/>
<dbReference type="PDBsum" id="2WSC"/>
<dbReference type="PDBsum" id="2WSE"/>
<dbReference type="PDBsum" id="2WSF"/>
<dbReference type="PDBsum" id="9GRX"/>
<dbReference type="EMDB" id="EMD-51527"/>
<dbReference type="SMR" id="Q41385"/>
<dbReference type="EvolutionaryTrace" id="Q41385"/>
<dbReference type="Proteomes" id="UP001155700">
    <property type="component" value="Unplaced"/>
</dbReference>
<dbReference type="GO" id="GO:0009535">
    <property type="term" value="C:chloroplast thylakoid membrane"/>
    <property type="evidence" value="ECO:0007669"/>
    <property type="project" value="UniProtKB-SubCell"/>
</dbReference>
<dbReference type="GO" id="GO:0009538">
    <property type="term" value="C:photosystem I reaction center"/>
    <property type="evidence" value="ECO:0007669"/>
    <property type="project" value="InterPro"/>
</dbReference>
<dbReference type="GO" id="GO:0015979">
    <property type="term" value="P:photosynthesis"/>
    <property type="evidence" value="ECO:0007669"/>
    <property type="project" value="UniProtKB-KW"/>
</dbReference>
<dbReference type="FunFam" id="1.20.1240.10:FF:000001">
    <property type="entry name" value="Photosystem I reaction center subunit XI"/>
    <property type="match status" value="1"/>
</dbReference>
<dbReference type="Gene3D" id="1.20.1240.10">
    <property type="entry name" value="Photosystem I PsaL, reaction centre subunit XI"/>
    <property type="match status" value="1"/>
</dbReference>
<dbReference type="InterPro" id="IPR003757">
    <property type="entry name" value="PSI_PsaL"/>
</dbReference>
<dbReference type="InterPro" id="IPR036592">
    <property type="entry name" value="PSI_PsaL_sf"/>
</dbReference>
<dbReference type="InterPro" id="IPR022980">
    <property type="entry name" value="PSI_suXI"/>
</dbReference>
<dbReference type="PANTHER" id="PTHR34803">
    <property type="entry name" value="PHOTOSYSTEM I REACTION CENTER SUBUNIT XI, CHLOROPLASTIC"/>
    <property type="match status" value="1"/>
</dbReference>
<dbReference type="PANTHER" id="PTHR34803:SF2">
    <property type="entry name" value="PHOTOSYSTEM I REACTION CENTER SUBUNIT XI, CHLOROPLASTIC"/>
    <property type="match status" value="1"/>
</dbReference>
<dbReference type="Pfam" id="PF02605">
    <property type="entry name" value="PsaL"/>
    <property type="match status" value="1"/>
</dbReference>
<dbReference type="SUPFAM" id="SSF81568">
    <property type="entry name" value="Photosystem I reaction center subunit XI, PsaL"/>
    <property type="match status" value="1"/>
</dbReference>
<reference key="1">
    <citation type="journal article" date="1993" name="Plant Mol. Biol.">
        <title>Isolation and characterization of cDNA clones encoding a 18.8 kDa polypeptide, the product of the gene psaL, associated with photosystem I reaction center from spinach.</title>
        <authorList>
            <person name="Flieger K."/>
            <person name="Oelmueller R."/>
            <person name="Herrmann R.G."/>
        </authorList>
    </citation>
    <scope>NUCLEOTIDE SEQUENCE [MRNA]</scope>
    <source>
        <strain>cv. Monatol</strain>
    </source>
</reference>
<reference key="2">
    <citation type="journal article" date="1991" name="FEBS Lett.">
        <title>Two new components of 9 and 14 kDa from spinach photosystem I complex.</title>
        <authorList>
            <person name="Ikeuchi M."/>
            <person name="Inoue Y."/>
        </authorList>
    </citation>
    <scope>PROTEIN SEQUENCE OF 158-178</scope>
</reference>
<organism>
    <name type="scientific">Spinacia oleracea</name>
    <name type="common">Spinach</name>
    <dbReference type="NCBI Taxonomy" id="3562"/>
    <lineage>
        <taxon>Eukaryota</taxon>
        <taxon>Viridiplantae</taxon>
        <taxon>Streptophyta</taxon>
        <taxon>Embryophyta</taxon>
        <taxon>Tracheophyta</taxon>
        <taxon>Spermatophyta</taxon>
        <taxon>Magnoliopsida</taxon>
        <taxon>eudicotyledons</taxon>
        <taxon>Gunneridae</taxon>
        <taxon>Pentapetalae</taxon>
        <taxon>Caryophyllales</taxon>
        <taxon>Chenopodiaceae</taxon>
        <taxon>Chenopodioideae</taxon>
        <taxon>Anserineae</taxon>
        <taxon>Spinacia</taxon>
    </lineage>
</organism>
<protein>
    <recommendedName>
        <fullName>Photosystem I reaction center subunit XI, chloroplastic</fullName>
        <shortName>PSI-L</shortName>
    </recommendedName>
    <alternativeName>
        <fullName>PSI subunit V</fullName>
    </alternativeName>
</protein>
<gene>
    <name type="primary">PSAL</name>
</gene>
<keyword id="KW-0002">3D-structure</keyword>
<keyword id="KW-0150">Chloroplast</keyword>
<keyword id="KW-0903">Direct protein sequencing</keyword>
<keyword id="KW-0472">Membrane</keyword>
<keyword id="KW-0602">Photosynthesis</keyword>
<keyword id="KW-0603">Photosystem I</keyword>
<keyword id="KW-0934">Plastid</keyword>
<keyword id="KW-1185">Reference proteome</keyword>
<keyword id="KW-0793">Thylakoid</keyword>
<keyword id="KW-0809">Transit peptide</keyword>
<keyword id="KW-0812">Transmembrane</keyword>
<keyword id="KW-1133">Transmembrane helix</keyword>
<accession>Q41385</accession>
<proteinExistence type="evidence at protein level"/>
<comment type="subcellular location">
    <subcellularLocation>
        <location evidence="2">Plastid</location>
        <location evidence="2">Chloroplast thylakoid membrane</location>
        <topology evidence="2">Multi-pass membrane protein</topology>
    </subcellularLocation>
</comment>
<comment type="PTM">
    <text>The N-terminus is blocked.</text>
</comment>
<comment type="similarity">
    <text evidence="2">Belongs to the PsaL family.</text>
</comment>
<name>PSAL_SPIOL</name>